<sequence>MKKRFISVCAIAIALFVSLTPAALAADLANGAKVFSGNCAACHMGGGNVVMANKTLKKEALEQFGMYSEDAIIYQVQHGKNAMPAFAGRLTDEQIQDVAAYVLDQAAKGWAG</sequence>
<accession>Q9F1L9</accession>
<feature type="signal peptide" evidence="1">
    <location>
        <begin position="1"/>
        <end position="25"/>
    </location>
</feature>
<feature type="chain" id="PRO_0000023861" description="Cytochrome c6">
    <location>
        <begin position="26"/>
        <end position="112"/>
    </location>
</feature>
<feature type="binding site" description="covalent" evidence="1">
    <location>
        <position position="39"/>
    </location>
    <ligand>
        <name>heme c</name>
        <dbReference type="ChEBI" id="CHEBI:61717"/>
    </ligand>
</feature>
<feature type="binding site" description="covalent" evidence="1">
    <location>
        <position position="42"/>
    </location>
    <ligand>
        <name>heme c</name>
        <dbReference type="ChEBI" id="CHEBI:61717"/>
    </ligand>
</feature>
<feature type="binding site" description="axial binding residue" evidence="1">
    <location>
        <position position="43"/>
    </location>
    <ligand>
        <name>heme c</name>
        <dbReference type="ChEBI" id="CHEBI:61717"/>
    </ligand>
    <ligandPart>
        <name>Fe</name>
        <dbReference type="ChEBI" id="CHEBI:18248"/>
    </ligandPart>
</feature>
<feature type="binding site" description="axial binding residue" evidence="1">
    <location>
        <position position="83"/>
    </location>
    <ligand>
        <name>heme c</name>
        <dbReference type="ChEBI" id="CHEBI:61717"/>
    </ligand>
    <ligandPart>
        <name>Fe</name>
        <dbReference type="ChEBI" id="CHEBI:18248"/>
    </ligandPart>
</feature>
<proteinExistence type="inferred from homology"/>
<reference key="1">
    <citation type="submission" date="2000-12" db="EMBL/GenBank/DDBJ databases">
        <authorList>
            <person name="Katoh H."/>
            <person name="Itoh S."/>
            <person name="Shen J.-R."/>
            <person name="Ikeuchi M."/>
        </authorList>
    </citation>
    <scope>NUCLEOTIDE SEQUENCE [GENOMIC DNA]</scope>
</reference>
<name>CYC6_THEVL</name>
<keyword id="KW-0249">Electron transport</keyword>
<keyword id="KW-0349">Heme</keyword>
<keyword id="KW-0408">Iron</keyword>
<keyword id="KW-0479">Metal-binding</keyword>
<keyword id="KW-0602">Photosynthesis</keyword>
<keyword id="KW-0732">Signal</keyword>
<keyword id="KW-0793">Thylakoid</keyword>
<keyword id="KW-0813">Transport</keyword>
<comment type="function">
    <text evidence="1">Functions as an electron carrier between membrane-bound cytochrome b6-f and photosystem I in oxygenic photosynthesis.</text>
</comment>
<comment type="subunit">
    <text evidence="1">Monomer.</text>
</comment>
<comment type="subcellular location">
    <subcellularLocation>
        <location evidence="2">Cellular thylakoid lumen</location>
    </subcellularLocation>
</comment>
<comment type="PTM">
    <text evidence="1">Binds 1 heme c group covalently per subunit.</text>
</comment>
<comment type="similarity">
    <text evidence="2">Belongs to the cytochrome c family. PetJ subfamily.</text>
</comment>
<evidence type="ECO:0000250" key="1"/>
<evidence type="ECO:0000305" key="2"/>
<gene>
    <name type="primary">petJ</name>
</gene>
<dbReference type="EMBL" id="AB052598">
    <property type="protein sequence ID" value="BAB20065.1"/>
    <property type="molecule type" value="Genomic_DNA"/>
</dbReference>
<dbReference type="SMR" id="Q9F1L9"/>
<dbReference type="GO" id="GO:0031979">
    <property type="term" value="C:plasma membrane-derived thylakoid lumen"/>
    <property type="evidence" value="ECO:0007669"/>
    <property type="project" value="UniProtKB-SubCell"/>
</dbReference>
<dbReference type="GO" id="GO:0009055">
    <property type="term" value="F:electron transfer activity"/>
    <property type="evidence" value="ECO:0007669"/>
    <property type="project" value="UniProtKB-UniRule"/>
</dbReference>
<dbReference type="GO" id="GO:0020037">
    <property type="term" value="F:heme binding"/>
    <property type="evidence" value="ECO:0007669"/>
    <property type="project" value="InterPro"/>
</dbReference>
<dbReference type="GO" id="GO:0005506">
    <property type="term" value="F:iron ion binding"/>
    <property type="evidence" value="ECO:0007669"/>
    <property type="project" value="InterPro"/>
</dbReference>
<dbReference type="GO" id="GO:0015979">
    <property type="term" value="P:photosynthesis"/>
    <property type="evidence" value="ECO:0007669"/>
    <property type="project" value="UniProtKB-UniRule"/>
</dbReference>
<dbReference type="FunFam" id="1.10.760.10:FF:000038">
    <property type="entry name" value="Cytochrome c6"/>
    <property type="match status" value="1"/>
</dbReference>
<dbReference type="Gene3D" id="1.10.760.10">
    <property type="entry name" value="Cytochrome c-like domain"/>
    <property type="match status" value="1"/>
</dbReference>
<dbReference type="HAMAP" id="MF_00594">
    <property type="entry name" value="Cytc_PetJ"/>
    <property type="match status" value="1"/>
</dbReference>
<dbReference type="InterPro" id="IPR009056">
    <property type="entry name" value="Cyt_c-like_dom"/>
</dbReference>
<dbReference type="InterPro" id="IPR036909">
    <property type="entry name" value="Cyt_c-like_dom_sf"/>
</dbReference>
<dbReference type="InterPro" id="IPR023655">
    <property type="entry name" value="Cyt_C6"/>
</dbReference>
<dbReference type="InterPro" id="IPR008168">
    <property type="entry name" value="Cyt_C_IC"/>
</dbReference>
<dbReference type="NCBIfam" id="NF045930">
    <property type="entry name" value="Cytc6PetJCyano"/>
    <property type="match status" value="1"/>
</dbReference>
<dbReference type="PANTHER" id="PTHR34688">
    <property type="entry name" value="CYTOCHROME C6, CHLOROPLASTIC"/>
    <property type="match status" value="1"/>
</dbReference>
<dbReference type="PANTHER" id="PTHR34688:SF2">
    <property type="entry name" value="CYTOCHROME C6, CHLOROPLASTIC"/>
    <property type="match status" value="1"/>
</dbReference>
<dbReference type="Pfam" id="PF13442">
    <property type="entry name" value="Cytochrome_CBB3"/>
    <property type="match status" value="1"/>
</dbReference>
<dbReference type="PRINTS" id="PR00605">
    <property type="entry name" value="CYTCHROMECIC"/>
</dbReference>
<dbReference type="SUPFAM" id="SSF46626">
    <property type="entry name" value="Cytochrome c"/>
    <property type="match status" value="1"/>
</dbReference>
<dbReference type="PROSITE" id="PS51007">
    <property type="entry name" value="CYTC"/>
    <property type="match status" value="1"/>
</dbReference>
<organism>
    <name type="scientific">Thermostichus vulcanus</name>
    <name type="common">Synechococcus vulcanus</name>
    <dbReference type="NCBI Taxonomy" id="32053"/>
    <lineage>
        <taxon>Bacteria</taxon>
        <taxon>Bacillati</taxon>
        <taxon>Cyanobacteriota</taxon>
        <taxon>Cyanophyceae</taxon>
        <taxon>Thermostichales</taxon>
        <taxon>Thermostichaceae</taxon>
        <taxon>Thermostichus</taxon>
    </lineage>
</organism>
<protein>
    <recommendedName>
        <fullName>Cytochrome c6</fullName>
    </recommendedName>
    <alternativeName>
        <fullName>Cytochrome c-553</fullName>
    </alternativeName>
    <alternativeName>
        <fullName>Cytochrome c553</fullName>
    </alternativeName>
    <alternativeName>
        <fullName>Soluble cytochrome f</fullName>
    </alternativeName>
</protein>